<sequence length="463" mass="50903">MELEKKEILVSEFEREETMTTTNKLKFIIPSIVGLFLFLIPLNYGGKWTIGVGILAETAQGITADYLPAFMVAVLLLSVVLTIAANVAKPQWIMNSAFLKGLFHVSGFWLVMRAAGALFAVMVIFEIGPAFIWDAYTGGTVLYELVPVLTKWFLFAGLLMPLLLEFGLMDFIGTSLRKVMRPLFRLPGRSSIDAVASWMGSGTVGVLITTKQYEEGFYTKREAAVIATNFSVASIAFSLVVISFIGLDYMFIPFYLTVIVAGLIAAIICPRIPPLSRKADTYYEGAGKQISEEVPEGKTSRQWALERAVATASKVKSVKGVATKGFQNVLDIWFGLIPLVMALGTIALIVAEYTSIFTYLSYPFVPILELLRIPEAQAAAPALLVGFADMFLPAVVGSGIESELTRFVIAAVSMTQLIYMSEIGILLLRSKIPLSLLDLVIVFFQRTIITLPIIVFMAHVFFF</sequence>
<organism>
    <name type="scientific">Alkalihalophilus pseudofirmus (strain ATCC BAA-2126 / JCM 17055 / OF4)</name>
    <name type="common">Bacillus pseudofirmus</name>
    <dbReference type="NCBI Taxonomy" id="398511"/>
    <lineage>
        <taxon>Bacteria</taxon>
        <taxon>Bacillati</taxon>
        <taxon>Bacillota</taxon>
        <taxon>Bacilli</taxon>
        <taxon>Bacillales</taxon>
        <taxon>Bacillaceae</taxon>
        <taxon>Alkalihalophilus</taxon>
    </lineage>
</organism>
<name>Y2044_ALKPO</name>
<keyword id="KW-1185">Reference proteome</keyword>
<gene>
    <name type="ordered locus">BpOF4_10220</name>
</gene>
<feature type="chain" id="PRO_0000066276" description="Uncharacterized protein BpOF4_10220">
    <location>
        <begin position="1"/>
        <end position="463"/>
    </location>
</feature>
<dbReference type="EMBL" id="AH000868">
    <property type="protein sequence ID" value="AAA22559.1"/>
    <property type="molecule type" value="Genomic_DNA"/>
</dbReference>
<dbReference type="EMBL" id="CP001878">
    <property type="protein sequence ID" value="ADC50097.1"/>
    <property type="molecule type" value="Genomic_DNA"/>
</dbReference>
<dbReference type="PIR" id="S27491">
    <property type="entry name" value="S27491"/>
</dbReference>
<dbReference type="RefSeq" id="WP_012957463.1">
    <property type="nucleotide sequence ID" value="NC_013791.2"/>
</dbReference>
<dbReference type="STRING" id="398511.BpOF4_10220"/>
<dbReference type="KEGG" id="bpf:BpOF4_10220"/>
<dbReference type="eggNOG" id="COG3314">
    <property type="taxonomic scope" value="Bacteria"/>
</dbReference>
<dbReference type="HOGENOM" id="CLU_048533_0_0_9"/>
<dbReference type="Proteomes" id="UP000001544">
    <property type="component" value="Chromosome"/>
</dbReference>
<dbReference type="InterPro" id="IPR011642">
    <property type="entry name" value="Gate_dom"/>
</dbReference>
<dbReference type="Pfam" id="PF07670">
    <property type="entry name" value="Gate"/>
    <property type="match status" value="1"/>
</dbReference>
<accession>P30267</accession>
<accession>D3FTM4</accession>
<proteinExistence type="predicted"/>
<protein>
    <recommendedName>
        <fullName>Uncharacterized protein BpOF4_10220</fullName>
    </recommendedName>
    <alternativeName>
        <fullName>ORF A</fullName>
    </alternativeName>
</protein>
<reference key="1">
    <citation type="submission" date="1991-12" db="EMBL/GenBank/DDBJ databases">
        <authorList>
            <person name="Quirk P.G."/>
            <person name="Krulwich T.A."/>
        </authorList>
    </citation>
    <scope>NUCLEOTIDE SEQUENCE [GENOMIC DNA]</scope>
</reference>
<reference key="2">
    <citation type="journal article" date="2011" name="Environ. Microbiol.">
        <title>Genome of alkaliphilic Bacillus pseudofirmus OF4 reveals adaptations that support the ability to grow in an external pH range from 7.5 to 11.4.</title>
        <authorList>
            <person name="Janto B."/>
            <person name="Ahmed A."/>
            <person name="Ito M."/>
            <person name="Liu J."/>
            <person name="Hicks D.B."/>
            <person name="Pagni S."/>
            <person name="Fackelmayer O.J."/>
            <person name="Smith T.A."/>
            <person name="Earl J."/>
            <person name="Elbourne L.D."/>
            <person name="Hassan K."/>
            <person name="Paulsen I.T."/>
            <person name="Kolsto A.B."/>
            <person name="Tourasse N.J."/>
            <person name="Ehrlich G.D."/>
            <person name="Boissy R."/>
            <person name="Ivey D.M."/>
            <person name="Li G."/>
            <person name="Xue Y."/>
            <person name="Ma Y."/>
            <person name="Hu F.Z."/>
            <person name="Krulwich T.A."/>
        </authorList>
    </citation>
    <scope>NUCLEOTIDE SEQUENCE [LARGE SCALE GENOMIC DNA]</scope>
    <source>
        <strain>ATCC BAA-2126 / JCM 17055 / OF4</strain>
    </source>
</reference>